<organism>
    <name type="scientific">Thermotoga maritima (strain ATCC 43589 / DSM 3109 / JCM 10099 / NBRC 100826 / MSB8)</name>
    <dbReference type="NCBI Taxonomy" id="243274"/>
    <lineage>
        <taxon>Bacteria</taxon>
        <taxon>Thermotogati</taxon>
        <taxon>Thermotogota</taxon>
        <taxon>Thermotogae</taxon>
        <taxon>Thermotogales</taxon>
        <taxon>Thermotogaceae</taxon>
        <taxon>Thermotoga</taxon>
    </lineage>
</organism>
<gene>
    <name evidence="1" type="primary">rpsH</name>
    <name type="ordered locus">TM_1486</name>
</gene>
<evidence type="ECO:0000255" key="1">
    <source>
        <dbReference type="HAMAP-Rule" id="MF_01302"/>
    </source>
</evidence>
<evidence type="ECO:0000305" key="2"/>
<protein>
    <recommendedName>
        <fullName evidence="1">Small ribosomal subunit protein uS8</fullName>
    </recommendedName>
    <alternativeName>
        <fullName evidence="2">30S ribosomal protein S8</fullName>
    </alternativeName>
</protein>
<feature type="chain" id="PRO_0000126509" description="Small ribosomal subunit protein uS8">
    <location>
        <begin position="1"/>
        <end position="134"/>
    </location>
</feature>
<feature type="sequence conflict" description="In Ref. 1; CAA79791." evidence="2" ref="1">
    <original>QL</original>
    <variation>PV</variation>
    <location>
        <begin position="122"/>
        <end position="123"/>
    </location>
</feature>
<comment type="function">
    <text evidence="1">One of the primary rRNA binding proteins, it binds directly to 16S rRNA central domain where it helps coordinate assembly of the platform of the 30S subunit.</text>
</comment>
<comment type="subunit">
    <text evidence="1">Part of the 30S ribosomal subunit. Contacts proteins S5 and S12.</text>
</comment>
<comment type="similarity">
    <text evidence="1">Belongs to the universal ribosomal protein uS8 family.</text>
</comment>
<comment type="sequence caution" evidence="2">
    <conflict type="erroneous initiation">
        <sequence resource="EMBL-CDS" id="CAA79791"/>
    </conflict>
</comment>
<proteinExistence type="inferred from homology"/>
<dbReference type="EMBL" id="Z21677">
    <property type="protein sequence ID" value="CAA79791.1"/>
    <property type="status" value="ALT_INIT"/>
    <property type="molecule type" value="Genomic_DNA"/>
</dbReference>
<dbReference type="EMBL" id="AE000512">
    <property type="protein sequence ID" value="AAD36552.1"/>
    <property type="molecule type" value="Genomic_DNA"/>
</dbReference>
<dbReference type="PIR" id="F72248">
    <property type="entry name" value="F72248"/>
</dbReference>
<dbReference type="RefSeq" id="NP_229286.1">
    <property type="nucleotide sequence ID" value="NC_000853.1"/>
</dbReference>
<dbReference type="RefSeq" id="WP_004081806.1">
    <property type="nucleotide sequence ID" value="NC_023151.1"/>
</dbReference>
<dbReference type="SMR" id="Q9ZAE5"/>
<dbReference type="FunCoup" id="Q9ZAE5">
    <property type="interactions" value="331"/>
</dbReference>
<dbReference type="STRING" id="243274.TM_1486"/>
<dbReference type="PaxDb" id="243274-THEMA_06870"/>
<dbReference type="DNASU" id="898003"/>
<dbReference type="EnsemblBacteria" id="AAD36552">
    <property type="protein sequence ID" value="AAD36552"/>
    <property type="gene ID" value="TM_1486"/>
</dbReference>
<dbReference type="KEGG" id="tma:TM1486"/>
<dbReference type="KEGG" id="tmi:THEMA_06870"/>
<dbReference type="KEGG" id="tmm:Tmari_1494"/>
<dbReference type="KEGG" id="tmw:THMA_1518"/>
<dbReference type="eggNOG" id="COG0096">
    <property type="taxonomic scope" value="Bacteria"/>
</dbReference>
<dbReference type="InParanoid" id="Q9ZAE5"/>
<dbReference type="OrthoDB" id="9802617at2"/>
<dbReference type="Proteomes" id="UP000008183">
    <property type="component" value="Chromosome"/>
</dbReference>
<dbReference type="GO" id="GO:0022627">
    <property type="term" value="C:cytosolic small ribosomal subunit"/>
    <property type="evidence" value="ECO:0000318"/>
    <property type="project" value="GO_Central"/>
</dbReference>
<dbReference type="GO" id="GO:0019843">
    <property type="term" value="F:rRNA binding"/>
    <property type="evidence" value="ECO:0007669"/>
    <property type="project" value="UniProtKB-UniRule"/>
</dbReference>
<dbReference type="GO" id="GO:0003735">
    <property type="term" value="F:structural constituent of ribosome"/>
    <property type="evidence" value="ECO:0000318"/>
    <property type="project" value="GO_Central"/>
</dbReference>
<dbReference type="GO" id="GO:0006412">
    <property type="term" value="P:translation"/>
    <property type="evidence" value="ECO:0007669"/>
    <property type="project" value="UniProtKB-UniRule"/>
</dbReference>
<dbReference type="FunFam" id="3.30.1370.30:FF:000002">
    <property type="entry name" value="30S ribosomal protein S8"/>
    <property type="match status" value="1"/>
</dbReference>
<dbReference type="FunFam" id="3.30.1490.10:FF:000001">
    <property type="entry name" value="30S ribosomal protein S8"/>
    <property type="match status" value="1"/>
</dbReference>
<dbReference type="Gene3D" id="3.30.1370.30">
    <property type="match status" value="1"/>
</dbReference>
<dbReference type="Gene3D" id="3.30.1490.10">
    <property type="match status" value="1"/>
</dbReference>
<dbReference type="HAMAP" id="MF_01302_B">
    <property type="entry name" value="Ribosomal_uS8_B"/>
    <property type="match status" value="1"/>
</dbReference>
<dbReference type="InterPro" id="IPR000630">
    <property type="entry name" value="Ribosomal_uS8"/>
</dbReference>
<dbReference type="InterPro" id="IPR047863">
    <property type="entry name" value="Ribosomal_uS8_CS"/>
</dbReference>
<dbReference type="InterPro" id="IPR035987">
    <property type="entry name" value="Ribosomal_uS8_sf"/>
</dbReference>
<dbReference type="NCBIfam" id="NF001109">
    <property type="entry name" value="PRK00136.1"/>
    <property type="match status" value="1"/>
</dbReference>
<dbReference type="PANTHER" id="PTHR11758">
    <property type="entry name" value="40S RIBOSOMAL PROTEIN S15A"/>
    <property type="match status" value="1"/>
</dbReference>
<dbReference type="Pfam" id="PF00410">
    <property type="entry name" value="Ribosomal_S8"/>
    <property type="match status" value="1"/>
</dbReference>
<dbReference type="SUPFAM" id="SSF56047">
    <property type="entry name" value="Ribosomal protein S8"/>
    <property type="match status" value="1"/>
</dbReference>
<dbReference type="PROSITE" id="PS00053">
    <property type="entry name" value="RIBOSOMAL_S8"/>
    <property type="match status" value="1"/>
</dbReference>
<reference key="1">
    <citation type="journal article" date="1994" name="J. Bacteriol.">
        <title>Phylogenetic depth of S10 and spc operons: cloning and sequencing of a ribosomal protein gene cluster from the extremely thermophilic bacterium Thermotoga maritima.</title>
        <authorList>
            <person name="Sanangelantoni A.M."/>
            <person name="Bocchetta M."/>
            <person name="Cammarano P."/>
            <person name="Tiboni O."/>
        </authorList>
    </citation>
    <scope>NUCLEOTIDE SEQUENCE [GENOMIC DNA]</scope>
    <source>
        <strain>ATCC 43589 / DSM 3109 / JCM 10099 / NBRC 100826 / MSB8</strain>
    </source>
</reference>
<reference key="2">
    <citation type="journal article" date="1999" name="Nature">
        <title>Evidence for lateral gene transfer between Archaea and Bacteria from genome sequence of Thermotoga maritima.</title>
        <authorList>
            <person name="Nelson K.E."/>
            <person name="Clayton R.A."/>
            <person name="Gill S.R."/>
            <person name="Gwinn M.L."/>
            <person name="Dodson R.J."/>
            <person name="Haft D.H."/>
            <person name="Hickey E.K."/>
            <person name="Peterson J.D."/>
            <person name="Nelson W.C."/>
            <person name="Ketchum K.A."/>
            <person name="McDonald L.A."/>
            <person name="Utterback T.R."/>
            <person name="Malek J.A."/>
            <person name="Linher K.D."/>
            <person name="Garrett M.M."/>
            <person name="Stewart A.M."/>
            <person name="Cotton M.D."/>
            <person name="Pratt M.S."/>
            <person name="Phillips C.A."/>
            <person name="Richardson D.L."/>
            <person name="Heidelberg J.F."/>
            <person name="Sutton G.G."/>
            <person name="Fleischmann R.D."/>
            <person name="Eisen J.A."/>
            <person name="White O."/>
            <person name="Salzberg S.L."/>
            <person name="Smith H.O."/>
            <person name="Venter J.C."/>
            <person name="Fraser C.M."/>
        </authorList>
    </citation>
    <scope>NUCLEOTIDE SEQUENCE [LARGE SCALE GENOMIC DNA]</scope>
    <source>
        <strain>ATCC 43589 / DSM 3109 / JCM 10099 / NBRC 100826 / MSB8</strain>
    </source>
</reference>
<name>RS8_THEMA</name>
<sequence length="134" mass="15289">MWSDPIADMLTRIRNANMVFKEYTDIPASNLKKKICEILKREGFIADYKYIEDGKQGILRVYLKYKGGRKNRERVIHGIVRVSHAGRRIYVDKDHIPKVKNGLGIAILTTSKGVLTDKEARQLGVGGEVIAYVW</sequence>
<keyword id="KW-1185">Reference proteome</keyword>
<keyword id="KW-0687">Ribonucleoprotein</keyword>
<keyword id="KW-0689">Ribosomal protein</keyword>
<keyword id="KW-0694">RNA-binding</keyword>
<keyword id="KW-0699">rRNA-binding</keyword>
<accession>Q9ZAE5</accession>